<name>YHGN_ECOLI</name>
<gene>
    <name type="primary">yhgN</name>
    <name type="ordered locus">b3434</name>
    <name type="ordered locus">JW3397</name>
</gene>
<protein>
    <recommendedName>
        <fullName>UPF0056 inner membrane protein YhgN</fullName>
    </recommendedName>
</protein>
<comment type="subcellular location">
    <subcellularLocation>
        <location>Cell inner membrane</location>
        <topology>Multi-pass membrane protein</topology>
    </subcellularLocation>
</comment>
<comment type="similarity">
    <text evidence="2">Belongs to the UPF0056 (MarC) family.</text>
</comment>
<reference key="1">
    <citation type="journal article" date="1997" name="Science">
        <title>The complete genome sequence of Escherichia coli K-12.</title>
        <authorList>
            <person name="Blattner F.R."/>
            <person name="Plunkett G. III"/>
            <person name="Bloch C.A."/>
            <person name="Perna N.T."/>
            <person name="Burland V."/>
            <person name="Riley M."/>
            <person name="Collado-Vides J."/>
            <person name="Glasner J.D."/>
            <person name="Rode C.K."/>
            <person name="Mayhew G.F."/>
            <person name="Gregor J."/>
            <person name="Davis N.W."/>
            <person name="Kirkpatrick H.A."/>
            <person name="Goeden M.A."/>
            <person name="Rose D.J."/>
            <person name="Mau B."/>
            <person name="Shao Y."/>
        </authorList>
    </citation>
    <scope>NUCLEOTIDE SEQUENCE [LARGE SCALE GENOMIC DNA]</scope>
    <source>
        <strain>K12 / MG1655 / ATCC 47076</strain>
    </source>
</reference>
<reference key="2">
    <citation type="journal article" date="2006" name="Mol. Syst. Biol.">
        <title>Highly accurate genome sequences of Escherichia coli K-12 strains MG1655 and W3110.</title>
        <authorList>
            <person name="Hayashi K."/>
            <person name="Morooka N."/>
            <person name="Yamamoto Y."/>
            <person name="Fujita K."/>
            <person name="Isono K."/>
            <person name="Choi S."/>
            <person name="Ohtsubo E."/>
            <person name="Baba T."/>
            <person name="Wanner B.L."/>
            <person name="Mori H."/>
            <person name="Horiuchi T."/>
        </authorList>
    </citation>
    <scope>NUCLEOTIDE SEQUENCE [LARGE SCALE GENOMIC DNA]</scope>
    <source>
        <strain>K12 / W3110 / ATCC 27325 / DSM 5911</strain>
    </source>
</reference>
<reference key="3">
    <citation type="journal article" date="2005" name="Science">
        <title>Global topology analysis of the Escherichia coli inner membrane proteome.</title>
        <authorList>
            <person name="Daley D.O."/>
            <person name="Rapp M."/>
            <person name="Granseth E."/>
            <person name="Melen K."/>
            <person name="Drew D."/>
            <person name="von Heijne G."/>
        </authorList>
    </citation>
    <scope>TOPOLOGY [LARGE SCALE ANALYSIS]</scope>
    <source>
        <strain>K12 / MG1655 / ATCC 47076</strain>
    </source>
</reference>
<sequence length="197" mass="21490">MNEIISAAVLLILIMDPLGNLPIFMSVLKHTEPKRRRAIMVRELLIALLVMLVFLFAGEKILAFLSLRAETVSISGGIILFLIAIKMIFPSASGNSSGLPAGEEPFIVPLAIPLVAGPTILATLMLLSHQYPNQMGHLVIALLLAWGGTFVILLQSSLFLRLLGEKGVNALERLMGLILVMMATQMFLDGIRMWMKG</sequence>
<proteinExistence type="evidence at protein level"/>
<feature type="chain" id="PRO_0000156902" description="UPF0056 inner membrane protein YhgN">
    <location>
        <begin position="1"/>
        <end position="197"/>
    </location>
</feature>
<feature type="topological domain" description="Periplasmic" evidence="1">
    <location>
        <begin position="1"/>
        <end position="3"/>
    </location>
</feature>
<feature type="transmembrane region" description="Helical" evidence="1">
    <location>
        <begin position="4"/>
        <end position="24"/>
    </location>
</feature>
<feature type="topological domain" description="Cytoplasmic" evidence="1">
    <location>
        <begin position="25"/>
        <end position="44"/>
    </location>
</feature>
<feature type="transmembrane region" description="Helical" evidence="1">
    <location>
        <begin position="45"/>
        <end position="65"/>
    </location>
</feature>
<feature type="topological domain" description="Periplasmic" evidence="1">
    <location>
        <begin position="66"/>
        <end position="71"/>
    </location>
</feature>
<feature type="transmembrane region" description="Helical" evidence="1">
    <location>
        <begin position="72"/>
        <end position="92"/>
    </location>
</feature>
<feature type="topological domain" description="Cytoplasmic" evidence="1">
    <location>
        <begin position="93"/>
        <end position="105"/>
    </location>
</feature>
<feature type="transmembrane region" description="Helical" evidence="1">
    <location>
        <begin position="106"/>
        <end position="126"/>
    </location>
</feature>
<feature type="topological domain" description="Periplasmic" evidence="1">
    <location>
        <begin position="127"/>
        <end position="138"/>
    </location>
</feature>
<feature type="transmembrane region" description="Helical" evidence="1">
    <location>
        <begin position="139"/>
        <end position="159"/>
    </location>
</feature>
<feature type="topological domain" description="Cytoplasmic" evidence="1">
    <location>
        <begin position="160"/>
        <end position="173"/>
    </location>
</feature>
<feature type="transmembrane region" description="Helical" evidence="1">
    <location>
        <begin position="174"/>
        <end position="194"/>
    </location>
</feature>
<feature type="topological domain" description="Periplasmic" evidence="1">
    <location>
        <begin position="195"/>
        <end position="197"/>
    </location>
</feature>
<keyword id="KW-0997">Cell inner membrane</keyword>
<keyword id="KW-1003">Cell membrane</keyword>
<keyword id="KW-0472">Membrane</keyword>
<keyword id="KW-1185">Reference proteome</keyword>
<keyword id="KW-0812">Transmembrane</keyword>
<keyword id="KW-1133">Transmembrane helix</keyword>
<accession>P67143</accession>
<accession>P46851</accession>
<accession>Q2M798</accession>
<dbReference type="EMBL" id="U18997">
    <property type="protein sequence ID" value="AAA58232.1"/>
    <property type="molecule type" value="Genomic_DNA"/>
</dbReference>
<dbReference type="EMBL" id="U00096">
    <property type="protein sequence ID" value="AAC76459.1"/>
    <property type="molecule type" value="Genomic_DNA"/>
</dbReference>
<dbReference type="EMBL" id="AP009048">
    <property type="protein sequence ID" value="BAE77858.1"/>
    <property type="molecule type" value="Genomic_DNA"/>
</dbReference>
<dbReference type="PIR" id="E65139">
    <property type="entry name" value="E65139"/>
</dbReference>
<dbReference type="RefSeq" id="NP_417892.1">
    <property type="nucleotide sequence ID" value="NC_000913.3"/>
</dbReference>
<dbReference type="RefSeq" id="WP_001002544.1">
    <property type="nucleotide sequence ID" value="NZ_STEB01000004.1"/>
</dbReference>
<dbReference type="BioGRID" id="4259298">
    <property type="interactions" value="183"/>
</dbReference>
<dbReference type="FunCoup" id="P67143">
    <property type="interactions" value="8"/>
</dbReference>
<dbReference type="STRING" id="511145.b3434"/>
<dbReference type="TCDB" id="2.A.95.1.5">
    <property type="family name" value="the 6 tms neutral amino acid transporter (naat) family"/>
</dbReference>
<dbReference type="PaxDb" id="511145-b3434"/>
<dbReference type="EnsemblBacteria" id="AAC76459">
    <property type="protein sequence ID" value="AAC76459"/>
    <property type="gene ID" value="b3434"/>
</dbReference>
<dbReference type="GeneID" id="93778555"/>
<dbReference type="GeneID" id="947938"/>
<dbReference type="KEGG" id="ecj:JW3397"/>
<dbReference type="KEGG" id="eco:b3434"/>
<dbReference type="KEGG" id="ecoc:C3026_18615"/>
<dbReference type="PATRIC" id="fig|1411691.4.peg.3294"/>
<dbReference type="EchoBASE" id="EB2776"/>
<dbReference type="eggNOG" id="COG2095">
    <property type="taxonomic scope" value="Bacteria"/>
</dbReference>
<dbReference type="HOGENOM" id="CLU_079909_1_1_6"/>
<dbReference type="InParanoid" id="P67143"/>
<dbReference type="OMA" id="IRMIFPQ"/>
<dbReference type="OrthoDB" id="21094at2"/>
<dbReference type="PhylomeDB" id="P67143"/>
<dbReference type="BioCyc" id="EcoCyc:G7753-MONOMER"/>
<dbReference type="PRO" id="PR:P67143"/>
<dbReference type="Proteomes" id="UP000000625">
    <property type="component" value="Chromosome"/>
</dbReference>
<dbReference type="GO" id="GO:0005886">
    <property type="term" value="C:plasma membrane"/>
    <property type="evidence" value="ECO:0000314"/>
    <property type="project" value="EcoCyc"/>
</dbReference>
<dbReference type="InterPro" id="IPR002771">
    <property type="entry name" value="Multi_antbiot-R_MarC"/>
</dbReference>
<dbReference type="NCBIfam" id="TIGR00427">
    <property type="entry name" value="NAAT family transporter"/>
    <property type="match status" value="1"/>
</dbReference>
<dbReference type="NCBIfam" id="NF008010">
    <property type="entry name" value="PRK10739.1"/>
    <property type="match status" value="1"/>
</dbReference>
<dbReference type="PANTHER" id="PTHR33508:SF10">
    <property type="entry name" value="UPF0056 INNER MEMBRANE PROTEIN YHGN"/>
    <property type="match status" value="1"/>
</dbReference>
<dbReference type="PANTHER" id="PTHR33508">
    <property type="entry name" value="UPF0056 MEMBRANE PROTEIN YHCE"/>
    <property type="match status" value="1"/>
</dbReference>
<dbReference type="Pfam" id="PF01914">
    <property type="entry name" value="MarC"/>
    <property type="match status" value="1"/>
</dbReference>
<organism>
    <name type="scientific">Escherichia coli (strain K12)</name>
    <dbReference type="NCBI Taxonomy" id="83333"/>
    <lineage>
        <taxon>Bacteria</taxon>
        <taxon>Pseudomonadati</taxon>
        <taxon>Pseudomonadota</taxon>
        <taxon>Gammaproteobacteria</taxon>
        <taxon>Enterobacterales</taxon>
        <taxon>Enterobacteriaceae</taxon>
        <taxon>Escherichia</taxon>
    </lineage>
</organism>
<evidence type="ECO:0000255" key="1"/>
<evidence type="ECO:0000305" key="2"/>